<sequence length="419" mass="45336">MHKLIIHGGTPLKGSINISGAKNAVLPIMAASILTDKLHITNVPKLTDVSTMKDLLRSHGADIEIIKHQDEFELIIDTKNINNFTADYEIVRKMRASIWVLGPLLTKYGKAKVSLPGGCAIGARQVDLHIAVLKAMGAEIEIEDGYINASSKGRLKGTHFVFDKVSVGATINAILVAVLAEGETVLFNCGREPEIVDLCNCLITMGADIAGIGTSEITIKGKDSLNKASYKVLSDRIEAGTYMFAAAITKGDVKICGIDYHIVENIALKLIETGIKVVPINNGVQVTYEGKLNSVDLETNPYPGFATDLQAQFMSLMTLSSGVSMITENIFENRFMHVPELCRMGADIVVRGNKAVVRGVEMLKGAEVMASDLRASVSLILAGLSTNSKTVLHRIYHLDRGFQDLEKKLSNCGADIKRV</sequence>
<comment type="function">
    <text evidence="1">Cell wall formation. Adds enolpyruvyl to UDP-N-acetylglucosamine.</text>
</comment>
<comment type="catalytic activity">
    <reaction evidence="1">
        <text>phosphoenolpyruvate + UDP-N-acetyl-alpha-D-glucosamine = UDP-N-acetyl-3-O-(1-carboxyvinyl)-alpha-D-glucosamine + phosphate</text>
        <dbReference type="Rhea" id="RHEA:18681"/>
        <dbReference type="ChEBI" id="CHEBI:43474"/>
        <dbReference type="ChEBI" id="CHEBI:57705"/>
        <dbReference type="ChEBI" id="CHEBI:58702"/>
        <dbReference type="ChEBI" id="CHEBI:68483"/>
        <dbReference type="EC" id="2.5.1.7"/>
    </reaction>
</comment>
<comment type="pathway">
    <text evidence="1">Cell wall biogenesis; peptidoglycan biosynthesis.</text>
</comment>
<comment type="subcellular location">
    <subcellularLocation>
        <location evidence="1">Cytoplasm</location>
    </subcellularLocation>
</comment>
<comment type="similarity">
    <text evidence="1">Belongs to the EPSP synthase family. MurA subfamily.</text>
</comment>
<feature type="chain" id="PRO_1000023093" description="UDP-N-acetylglucosamine 1-carboxyvinyltransferase">
    <location>
        <begin position="1"/>
        <end position="419"/>
    </location>
</feature>
<feature type="active site" description="Proton donor" evidence="1">
    <location>
        <position position="119"/>
    </location>
</feature>
<feature type="binding site" evidence="1">
    <location>
        <begin position="22"/>
        <end position="23"/>
    </location>
    <ligand>
        <name>phosphoenolpyruvate</name>
        <dbReference type="ChEBI" id="CHEBI:58702"/>
    </ligand>
</feature>
<feature type="binding site" evidence="1">
    <location>
        <position position="95"/>
    </location>
    <ligand>
        <name>UDP-N-acetyl-alpha-D-glucosamine</name>
        <dbReference type="ChEBI" id="CHEBI:57705"/>
    </ligand>
</feature>
<feature type="binding site" evidence="1">
    <location>
        <begin position="164"/>
        <end position="167"/>
    </location>
    <ligand>
        <name>UDP-N-acetyl-alpha-D-glucosamine</name>
        <dbReference type="ChEBI" id="CHEBI:57705"/>
    </ligand>
</feature>
<feature type="binding site" evidence="1">
    <location>
        <position position="308"/>
    </location>
    <ligand>
        <name>UDP-N-acetyl-alpha-D-glucosamine</name>
        <dbReference type="ChEBI" id="CHEBI:57705"/>
    </ligand>
</feature>
<feature type="binding site" evidence="1">
    <location>
        <position position="330"/>
    </location>
    <ligand>
        <name>UDP-N-acetyl-alpha-D-glucosamine</name>
        <dbReference type="ChEBI" id="CHEBI:57705"/>
    </ligand>
</feature>
<feature type="modified residue" description="2-(S-cysteinyl)pyruvic acid O-phosphothioketal" evidence="1">
    <location>
        <position position="119"/>
    </location>
</feature>
<organism>
    <name type="scientific">Rickettsia rickettsii (strain Sheila Smith)</name>
    <dbReference type="NCBI Taxonomy" id="392021"/>
    <lineage>
        <taxon>Bacteria</taxon>
        <taxon>Pseudomonadati</taxon>
        <taxon>Pseudomonadota</taxon>
        <taxon>Alphaproteobacteria</taxon>
        <taxon>Rickettsiales</taxon>
        <taxon>Rickettsiaceae</taxon>
        <taxon>Rickettsieae</taxon>
        <taxon>Rickettsia</taxon>
        <taxon>spotted fever group</taxon>
    </lineage>
</organism>
<keyword id="KW-0131">Cell cycle</keyword>
<keyword id="KW-0132">Cell division</keyword>
<keyword id="KW-0133">Cell shape</keyword>
<keyword id="KW-0961">Cell wall biogenesis/degradation</keyword>
<keyword id="KW-0963">Cytoplasm</keyword>
<keyword id="KW-0573">Peptidoglycan synthesis</keyword>
<keyword id="KW-0670">Pyruvate</keyword>
<keyword id="KW-0808">Transferase</keyword>
<reference key="1">
    <citation type="submission" date="2007-09" db="EMBL/GenBank/DDBJ databases">
        <title>Complete genome sequence of Rickettsia rickettsii.</title>
        <authorList>
            <person name="Madan A."/>
            <person name="Fahey J."/>
            <person name="Helton E."/>
            <person name="Ketteman M."/>
            <person name="Madan A."/>
            <person name="Rodrigues S."/>
            <person name="Sanchez A."/>
            <person name="Dasch G."/>
            <person name="Eremeeva M."/>
        </authorList>
    </citation>
    <scope>NUCLEOTIDE SEQUENCE [LARGE SCALE GENOMIC DNA]</scope>
    <source>
        <strain>Sheila Smith</strain>
    </source>
</reference>
<accession>A8GSV0</accession>
<protein>
    <recommendedName>
        <fullName evidence="1">UDP-N-acetylglucosamine 1-carboxyvinyltransferase</fullName>
        <ecNumber evidence="1">2.5.1.7</ecNumber>
    </recommendedName>
    <alternativeName>
        <fullName evidence="1">Enoylpyruvate transferase</fullName>
    </alternativeName>
    <alternativeName>
        <fullName evidence="1">UDP-N-acetylglucosamine enolpyruvyl transferase</fullName>
        <shortName evidence="1">EPT</shortName>
    </alternativeName>
</protein>
<name>MURA_RICRS</name>
<gene>
    <name evidence="1" type="primary">murA</name>
    <name type="ordered locus">A1G_04875</name>
</gene>
<dbReference type="EC" id="2.5.1.7" evidence="1"/>
<dbReference type="EMBL" id="CP000848">
    <property type="protein sequence ID" value="ABV76475.1"/>
    <property type="molecule type" value="Genomic_DNA"/>
</dbReference>
<dbReference type="RefSeq" id="WP_012151046.1">
    <property type="nucleotide sequence ID" value="NZ_CP121767.1"/>
</dbReference>
<dbReference type="SMR" id="A8GSV0"/>
<dbReference type="GeneID" id="79937566"/>
<dbReference type="KEGG" id="rri:A1G_04875"/>
<dbReference type="HOGENOM" id="CLU_027387_0_0_5"/>
<dbReference type="UniPathway" id="UPA00219"/>
<dbReference type="Proteomes" id="UP000006832">
    <property type="component" value="Chromosome"/>
</dbReference>
<dbReference type="GO" id="GO:0005737">
    <property type="term" value="C:cytoplasm"/>
    <property type="evidence" value="ECO:0007669"/>
    <property type="project" value="UniProtKB-SubCell"/>
</dbReference>
<dbReference type="GO" id="GO:0008760">
    <property type="term" value="F:UDP-N-acetylglucosamine 1-carboxyvinyltransferase activity"/>
    <property type="evidence" value="ECO:0007669"/>
    <property type="project" value="UniProtKB-UniRule"/>
</dbReference>
<dbReference type="GO" id="GO:0051301">
    <property type="term" value="P:cell division"/>
    <property type="evidence" value="ECO:0007669"/>
    <property type="project" value="UniProtKB-KW"/>
</dbReference>
<dbReference type="GO" id="GO:0071555">
    <property type="term" value="P:cell wall organization"/>
    <property type="evidence" value="ECO:0007669"/>
    <property type="project" value="UniProtKB-KW"/>
</dbReference>
<dbReference type="GO" id="GO:0009252">
    <property type="term" value="P:peptidoglycan biosynthetic process"/>
    <property type="evidence" value="ECO:0007669"/>
    <property type="project" value="UniProtKB-UniRule"/>
</dbReference>
<dbReference type="GO" id="GO:0008360">
    <property type="term" value="P:regulation of cell shape"/>
    <property type="evidence" value="ECO:0007669"/>
    <property type="project" value="UniProtKB-KW"/>
</dbReference>
<dbReference type="GO" id="GO:0019277">
    <property type="term" value="P:UDP-N-acetylgalactosamine biosynthetic process"/>
    <property type="evidence" value="ECO:0007669"/>
    <property type="project" value="InterPro"/>
</dbReference>
<dbReference type="CDD" id="cd01555">
    <property type="entry name" value="UdpNAET"/>
    <property type="match status" value="1"/>
</dbReference>
<dbReference type="FunFam" id="3.65.10.10:FF:000001">
    <property type="entry name" value="UDP-N-acetylglucosamine 1-carboxyvinyltransferase"/>
    <property type="match status" value="1"/>
</dbReference>
<dbReference type="Gene3D" id="3.65.10.10">
    <property type="entry name" value="Enolpyruvate transferase domain"/>
    <property type="match status" value="2"/>
</dbReference>
<dbReference type="HAMAP" id="MF_00111">
    <property type="entry name" value="MurA"/>
    <property type="match status" value="1"/>
</dbReference>
<dbReference type="InterPro" id="IPR001986">
    <property type="entry name" value="Enolpyruvate_Tfrase_dom"/>
</dbReference>
<dbReference type="InterPro" id="IPR036968">
    <property type="entry name" value="Enolpyruvate_Tfrase_sf"/>
</dbReference>
<dbReference type="InterPro" id="IPR050068">
    <property type="entry name" value="MurA_subfamily"/>
</dbReference>
<dbReference type="InterPro" id="IPR013792">
    <property type="entry name" value="RNA3'P_cycl/enolpyr_Trfase_a/b"/>
</dbReference>
<dbReference type="InterPro" id="IPR005750">
    <property type="entry name" value="UDP_GlcNAc_COvinyl_MurA"/>
</dbReference>
<dbReference type="NCBIfam" id="TIGR01072">
    <property type="entry name" value="murA"/>
    <property type="match status" value="1"/>
</dbReference>
<dbReference type="NCBIfam" id="NF006873">
    <property type="entry name" value="PRK09369.1"/>
    <property type="match status" value="1"/>
</dbReference>
<dbReference type="PANTHER" id="PTHR43783">
    <property type="entry name" value="UDP-N-ACETYLGLUCOSAMINE 1-CARBOXYVINYLTRANSFERASE"/>
    <property type="match status" value="1"/>
</dbReference>
<dbReference type="PANTHER" id="PTHR43783:SF1">
    <property type="entry name" value="UDP-N-ACETYLGLUCOSAMINE 1-CARBOXYVINYLTRANSFERASE"/>
    <property type="match status" value="1"/>
</dbReference>
<dbReference type="Pfam" id="PF00275">
    <property type="entry name" value="EPSP_synthase"/>
    <property type="match status" value="1"/>
</dbReference>
<dbReference type="SUPFAM" id="SSF55205">
    <property type="entry name" value="EPT/RTPC-like"/>
    <property type="match status" value="1"/>
</dbReference>
<evidence type="ECO:0000255" key="1">
    <source>
        <dbReference type="HAMAP-Rule" id="MF_00111"/>
    </source>
</evidence>
<proteinExistence type="inferred from homology"/>